<keyword id="KW-0378">Hydrolase</keyword>
<keyword id="KW-1185">Reference proteome</keyword>
<sequence>MFDLDPINAAFYDQIKDLPCPHQMGGYQQAYDSLEQIQKHDAAPDIDTTTIQVGKRYGPTTVTLFRLKTLVDKPLPMVFYTHGGGWIMGSAKSFAVLMEDLARRTQAVIVFPDYTRVPHQTFPYPLEQSYEVLDYMVRHSNQHQILHGTIALAGDSVGGHMAIAMMQMSLERKLPTQIGQLVLWAPVTITYKKLGSYTTFSHAPFLTEDSMDWMIESFLPNKEDRQTALASPLTHLSDEVLAQFPPTIIFLSTVDPLLDEGVAFGHRLQKNGVDASIMKAEGQMHAFCAVKALRDGPTARAVIDLAALRLRRIFPQRDTPGHPS</sequence>
<organism>
    <name type="scientific">Fusarium pseudograminearum (strain CS3096)</name>
    <name type="common">Wheat and barley crown-rot fungus</name>
    <dbReference type="NCBI Taxonomy" id="1028729"/>
    <lineage>
        <taxon>Eukaryota</taxon>
        <taxon>Fungi</taxon>
        <taxon>Dikarya</taxon>
        <taxon>Ascomycota</taxon>
        <taxon>Pezizomycotina</taxon>
        <taxon>Sordariomycetes</taxon>
        <taxon>Hypocreomycetidae</taxon>
        <taxon>Hypocreales</taxon>
        <taxon>Nectriaceae</taxon>
        <taxon>Fusarium</taxon>
    </lineage>
</organism>
<protein>
    <recommendedName>
        <fullName evidence="6">Esterase FPSE_08126</fullName>
        <ecNumber evidence="8">3.1.1.-</ecNumber>
    </recommendedName>
    <alternativeName>
        <fullName evidence="6">Fusarium detoxification of benzoxazolinone cluster protein FPSE_08126</fullName>
        <shortName evidence="6">FDB cluster protein FPSE_08126</shortName>
    </alternativeName>
</protein>
<reference key="1">
    <citation type="journal article" date="2012" name="PLoS Pathog.">
        <title>Comparative pathogenomics reveals horizontally acquired novel virulence genes in fungi infecting cereal hosts.</title>
        <authorList>
            <person name="Gardiner D.M."/>
            <person name="McDonald M.C."/>
            <person name="Covarelli L."/>
            <person name="Solomon P.S."/>
            <person name="Rusu A.G."/>
            <person name="Marshall M."/>
            <person name="Kazan K."/>
            <person name="Chakraborty S."/>
            <person name="McDonald B.A."/>
            <person name="Manners J.M."/>
        </authorList>
    </citation>
    <scope>NUCLEOTIDE SEQUENCE [LARGE SCALE GENOMIC DNA]</scope>
    <source>
        <strain>CS3096</strain>
    </source>
</reference>
<reference key="2">
    <citation type="journal article" date="2015" name="Fungal Genet. Biol.">
        <title>A gamma-lactamase from cereal infecting Fusarium spp. catalyses the first step in the degradation of the benzoxazolinone class of phytoalexins.</title>
        <authorList>
            <person name="Kettle A.J."/>
            <person name="Carere J."/>
            <person name="Batley J."/>
            <person name="Benfield A.H."/>
            <person name="Manners J.M."/>
            <person name="Kazan K."/>
            <person name="Gardiner D.M."/>
        </authorList>
    </citation>
    <scope>FUNCTION</scope>
</reference>
<reference key="3">
    <citation type="journal article" date="2015" name="Mol. Plant Pathol.">
        <title>Degradation of the benzoxazolinone class of phytoalexins is important for virulence of Fusarium pseudograminearum towards wheat.</title>
        <authorList>
            <person name="Kettle A.J."/>
            <person name="Batley J."/>
            <person name="Benfield A.H."/>
            <person name="Manners J.M."/>
            <person name="Kazan K."/>
            <person name="Gardiner D.M."/>
        </authorList>
    </citation>
    <scope>FUNCTION</scope>
    <scope>INDUCTION</scope>
</reference>
<reference key="4">
    <citation type="journal article" date="2016" name="Fungal Genet. Biol.">
        <title>The Fdb3 transcription factor of the Fusarium Detoxification of Benzoxazolinone gene cluster is required for MBOA but not BOA degradation in Fusarium pseudograminearum.</title>
        <authorList>
            <person name="Kettle A.J."/>
            <person name="Carere J."/>
            <person name="Batley J."/>
            <person name="Manners J.M."/>
            <person name="Kazan K."/>
            <person name="Gardiner D.M."/>
        </authorList>
    </citation>
    <scope>FUNCTION</scope>
    <scope>INDUCTION</scope>
    <scope>DISRUPTION PHENOTYPE</scope>
</reference>
<evidence type="ECO:0000250" key="1">
    <source>
        <dbReference type="UniProtKB" id="O06350"/>
    </source>
</evidence>
<evidence type="ECO:0000250" key="2">
    <source>
        <dbReference type="UniProtKB" id="W7MLD5"/>
    </source>
</evidence>
<evidence type="ECO:0000269" key="3">
    <source>
    </source>
</evidence>
<evidence type="ECO:0000269" key="4">
    <source>
    </source>
</evidence>
<evidence type="ECO:0000269" key="5">
    <source>
    </source>
</evidence>
<evidence type="ECO:0000303" key="6">
    <source>
    </source>
</evidence>
<evidence type="ECO:0000305" key="7"/>
<evidence type="ECO:0000305" key="8">
    <source>
    </source>
</evidence>
<feature type="chain" id="PRO_0000454616" description="Esterase FPSE_08126">
    <location>
        <begin position="1"/>
        <end position="324"/>
    </location>
</feature>
<feature type="active site" evidence="1">
    <location>
        <position position="156"/>
    </location>
</feature>
<feature type="active site" evidence="1">
    <location>
        <position position="255"/>
    </location>
</feature>
<feature type="active site" evidence="1">
    <location>
        <position position="285"/>
    </location>
</feature>
<dbReference type="EC" id="3.1.1.-" evidence="8"/>
<dbReference type="EMBL" id="CM003199">
    <property type="protein sequence ID" value="EKJ71680.1"/>
    <property type="molecule type" value="Genomic_DNA"/>
</dbReference>
<dbReference type="RefSeq" id="XP_009259519.1">
    <property type="nucleotide sequence ID" value="XM_009261244.1"/>
</dbReference>
<dbReference type="SMR" id="K3VZ29"/>
<dbReference type="ESTHER" id="fuspc-fdb26">
    <property type="family name" value="Hormone-sensitive_lipase_like"/>
</dbReference>
<dbReference type="EnsemblFungi" id="EKJ71680">
    <property type="protein sequence ID" value="EKJ71680"/>
    <property type="gene ID" value="FPSE_08126"/>
</dbReference>
<dbReference type="GeneID" id="20366744"/>
<dbReference type="KEGG" id="fpu:FPSE_08126"/>
<dbReference type="eggNOG" id="KOG1515">
    <property type="taxonomic scope" value="Eukaryota"/>
</dbReference>
<dbReference type="HOGENOM" id="CLU_012494_6_0_1"/>
<dbReference type="OrthoDB" id="408631at2759"/>
<dbReference type="Proteomes" id="UP000007978">
    <property type="component" value="Chromosome 2"/>
</dbReference>
<dbReference type="GO" id="GO:0016787">
    <property type="term" value="F:hydrolase activity"/>
    <property type="evidence" value="ECO:0007669"/>
    <property type="project" value="UniProtKB-KW"/>
</dbReference>
<dbReference type="Gene3D" id="3.40.50.1820">
    <property type="entry name" value="alpha/beta hydrolase"/>
    <property type="match status" value="1"/>
</dbReference>
<dbReference type="InterPro" id="IPR013094">
    <property type="entry name" value="AB_hydrolase_3"/>
</dbReference>
<dbReference type="InterPro" id="IPR029058">
    <property type="entry name" value="AB_hydrolase_fold"/>
</dbReference>
<dbReference type="InterPro" id="IPR050300">
    <property type="entry name" value="GDXG_lipolytic_enzyme"/>
</dbReference>
<dbReference type="PANTHER" id="PTHR48081">
    <property type="entry name" value="AB HYDROLASE SUPERFAMILY PROTEIN C4A8.06C"/>
    <property type="match status" value="1"/>
</dbReference>
<dbReference type="PANTHER" id="PTHR48081:SF8">
    <property type="entry name" value="ALPHA_BETA HYDROLASE FOLD-3 DOMAIN-CONTAINING PROTEIN-RELATED"/>
    <property type="match status" value="1"/>
</dbReference>
<dbReference type="Pfam" id="PF07859">
    <property type="entry name" value="Abhydrolase_3"/>
    <property type="match status" value="1"/>
</dbReference>
<dbReference type="SUPFAM" id="SSF53474">
    <property type="entry name" value="alpha/beta-Hydrolases"/>
    <property type="match status" value="1"/>
</dbReference>
<accession>K3VZ29</accession>
<gene>
    <name type="ORF">FPSE_08126</name>
</gene>
<proteinExistence type="evidence at transcript level"/>
<comment type="function">
    <text evidence="2 3 4 5 8">Esterase; part of the Fusarium detoxification of benzoxazolinone cluster involved in the degradation of benzoxazolinones produced by the host plant (PubMed:25727347, PubMed:26296598, PubMed:26828593). Maize, wheat, and rye produce the 2 benzoxazinone phytoanticipins 2,4-dihy-droxy-7-methoxy-1,4-benzoxazin-3-one (DIMBOA) and 2,4-dihydroxy-1,4-benzoxazin-3-one (DIBOA) that, due to their inherent instability once released, spontaneously degrade to the more stable corresponding benzoxazolinones, 6-methoxy-2-benzoxazolinone (MBOA) and 2-benzoxazolinone (BOA), respectively (By similarity). The first step in the detoxification of benzoxazolinones involves the hydrolysis of the cyclic ester bond of benzoxazolinones by the gamma-lactamase FDB1 to aminophenols (PubMed:26296598). FDB1 is able to convert 2-benzoxazolinone (BOA) into 2-aminophenol (2-AP), as well as 6-methoxy-2-benzoxazolinone (MBOA) into 5-methoxy-2-aminophenol (2-AMP) (PubMed:25727347, PubMed:26296598). The N-malonyltransferase FDB2 then metabolizes aminophenols via N-malonylation to non-toxic malonamic acids (PubMed:26296598). FDB2 converts 2-AP into N-(2-hydroxyphenyl) malonamic acid (HPMA) and 2-AMP into N-(2-hydroxy-4-methoxyphenyl) malonamic acid (HMPMA) (PubMed:26296598). The cluster also contains 2 transcription factors (FDB3 and FPSE_08121), an aldo-keto reductase (FPSE_08125) that possibly associates with a ketone component of BOA and MBOA degradation, an esterase (FPSE_08126), an acyl-CoA transferase (FPSE_08120), a solute carrier protein (FPSE_08119) and a transmembrane transporter (FPSE_08127) proposed to shuttle metabolites of benzoxazolinone degradation (Probable).</text>
</comment>
<comment type="induction">
    <text evidence="3 5">Expression is induced in response to 2-benzoxasolinone (BOA) exposure (PubMed:25727347). Expression is also induced in response to 6-methoxy-2-benzoxazolinone (MBOA) and 2-aminophenol (2-AP) treatment (PubMed:26828593).</text>
</comment>
<comment type="disruption phenotype">
    <text evidence="5">Does not affect tolerance to benzoxazolinone.</text>
</comment>
<comment type="similarity">
    <text evidence="7">Belongs to the AB hydrolase 3 family.</text>
</comment>
<name>FDB26_FUSPC</name>